<feature type="chain" id="PRO_0000196947" description="2,3,4,5-tetrahydropyridine-2,6-dicarboxylate N-succinyltransferase">
    <location>
        <begin position="1"/>
        <end position="275"/>
    </location>
</feature>
<feature type="binding site" evidence="1">
    <location>
        <position position="104"/>
    </location>
    <ligand>
        <name>substrate</name>
    </ligand>
</feature>
<feature type="binding site" evidence="1">
    <location>
        <position position="141"/>
    </location>
    <ligand>
        <name>substrate</name>
    </ligand>
</feature>
<keyword id="KW-0012">Acyltransferase</keyword>
<keyword id="KW-0028">Amino-acid biosynthesis</keyword>
<keyword id="KW-0963">Cytoplasm</keyword>
<keyword id="KW-0220">Diaminopimelate biosynthesis</keyword>
<keyword id="KW-0457">Lysine biosynthesis</keyword>
<keyword id="KW-0677">Repeat</keyword>
<keyword id="KW-0808">Transferase</keyword>
<organism>
    <name type="scientific">Mannheimia succiniciproducens (strain KCTC 0769BP / MBEL55E)</name>
    <dbReference type="NCBI Taxonomy" id="221988"/>
    <lineage>
        <taxon>Bacteria</taxon>
        <taxon>Pseudomonadati</taxon>
        <taxon>Pseudomonadota</taxon>
        <taxon>Gammaproteobacteria</taxon>
        <taxon>Pasteurellales</taxon>
        <taxon>Pasteurellaceae</taxon>
        <taxon>Basfia</taxon>
    </lineage>
</organism>
<dbReference type="EC" id="2.3.1.117" evidence="1"/>
<dbReference type="EMBL" id="AE016827">
    <property type="protein sequence ID" value="AAU37784.1"/>
    <property type="molecule type" value="Genomic_DNA"/>
</dbReference>
<dbReference type="RefSeq" id="WP_011200351.1">
    <property type="nucleotide sequence ID" value="NC_006300.1"/>
</dbReference>
<dbReference type="SMR" id="Q65TC6"/>
<dbReference type="STRING" id="221988.MS1177"/>
<dbReference type="KEGG" id="msu:MS1177"/>
<dbReference type="eggNOG" id="COG2171">
    <property type="taxonomic scope" value="Bacteria"/>
</dbReference>
<dbReference type="HOGENOM" id="CLU_050859_0_1_6"/>
<dbReference type="OrthoDB" id="9775362at2"/>
<dbReference type="UniPathway" id="UPA00034">
    <property type="reaction ID" value="UER00019"/>
</dbReference>
<dbReference type="Proteomes" id="UP000000607">
    <property type="component" value="Chromosome"/>
</dbReference>
<dbReference type="GO" id="GO:0005737">
    <property type="term" value="C:cytoplasm"/>
    <property type="evidence" value="ECO:0007669"/>
    <property type="project" value="UniProtKB-SubCell"/>
</dbReference>
<dbReference type="GO" id="GO:0008666">
    <property type="term" value="F:2,3,4,5-tetrahydropyridine-2,6-dicarboxylate N-succinyltransferase activity"/>
    <property type="evidence" value="ECO:0007669"/>
    <property type="project" value="UniProtKB-UniRule"/>
</dbReference>
<dbReference type="GO" id="GO:0016779">
    <property type="term" value="F:nucleotidyltransferase activity"/>
    <property type="evidence" value="ECO:0007669"/>
    <property type="project" value="TreeGrafter"/>
</dbReference>
<dbReference type="GO" id="GO:0019877">
    <property type="term" value="P:diaminopimelate biosynthetic process"/>
    <property type="evidence" value="ECO:0007669"/>
    <property type="project" value="UniProtKB-UniRule"/>
</dbReference>
<dbReference type="GO" id="GO:0009089">
    <property type="term" value="P:lysine biosynthetic process via diaminopimelate"/>
    <property type="evidence" value="ECO:0007669"/>
    <property type="project" value="UniProtKB-UniRule"/>
</dbReference>
<dbReference type="CDD" id="cd03350">
    <property type="entry name" value="LbH_THP_succinylT"/>
    <property type="match status" value="1"/>
</dbReference>
<dbReference type="Gene3D" id="2.160.10.10">
    <property type="entry name" value="Hexapeptide repeat proteins"/>
    <property type="match status" value="1"/>
</dbReference>
<dbReference type="Gene3D" id="1.10.166.10">
    <property type="entry name" value="Tetrahydrodipicolinate-N-succinyltransferase, N-terminal domain"/>
    <property type="match status" value="1"/>
</dbReference>
<dbReference type="HAMAP" id="MF_00811">
    <property type="entry name" value="DapD"/>
    <property type="match status" value="1"/>
</dbReference>
<dbReference type="InterPro" id="IPR005664">
    <property type="entry name" value="DapD_Trfase_Hexpep_rpt_fam"/>
</dbReference>
<dbReference type="InterPro" id="IPR001451">
    <property type="entry name" value="Hexapep"/>
</dbReference>
<dbReference type="InterPro" id="IPR018357">
    <property type="entry name" value="Hexapep_transf_CS"/>
</dbReference>
<dbReference type="InterPro" id="IPR023180">
    <property type="entry name" value="THP_succinylTrfase_dom1"/>
</dbReference>
<dbReference type="InterPro" id="IPR037133">
    <property type="entry name" value="THP_succinylTrfase_N_sf"/>
</dbReference>
<dbReference type="InterPro" id="IPR011004">
    <property type="entry name" value="Trimer_LpxA-like_sf"/>
</dbReference>
<dbReference type="NCBIfam" id="TIGR00965">
    <property type="entry name" value="dapD"/>
    <property type="match status" value="1"/>
</dbReference>
<dbReference type="NCBIfam" id="NF008808">
    <property type="entry name" value="PRK11830.1"/>
    <property type="match status" value="1"/>
</dbReference>
<dbReference type="PANTHER" id="PTHR19136:SF52">
    <property type="entry name" value="2,3,4,5-TETRAHYDROPYRIDINE-2,6-DICARBOXYLATE N-SUCCINYLTRANSFERASE"/>
    <property type="match status" value="1"/>
</dbReference>
<dbReference type="PANTHER" id="PTHR19136">
    <property type="entry name" value="MOLYBDENUM COFACTOR GUANYLYLTRANSFERASE"/>
    <property type="match status" value="1"/>
</dbReference>
<dbReference type="Pfam" id="PF14602">
    <property type="entry name" value="Hexapep_2"/>
    <property type="match status" value="1"/>
</dbReference>
<dbReference type="Pfam" id="PF14805">
    <property type="entry name" value="THDPS_N_2"/>
    <property type="match status" value="1"/>
</dbReference>
<dbReference type="SUPFAM" id="SSF51161">
    <property type="entry name" value="Trimeric LpxA-like enzymes"/>
    <property type="match status" value="1"/>
</dbReference>
<dbReference type="PROSITE" id="PS00101">
    <property type="entry name" value="HEXAPEP_TRANSFERASES"/>
    <property type="match status" value="1"/>
</dbReference>
<sequence>MSNLQSIIEAAFERRAEITPKTVDAQTKAAIEEVIAGLDCGKYRVAEKIDGDWVTHQWLKKAVLLSFRINDNQLIDGAETKYYDKVALKFADYTEERFQQEGFRVVPSATVRKGAYIAKNTVLMPSYVNIGAFVDEGTMVDTWVTVGSCAQIGKNVHLSGGVGIGGVLEPLQANPTIIGDNCFIGARSEIVEGVIVEDGCVISMGVFIGQSTKIYDRETGEVHYGRVPAGSVVVSGSLPSKDGSHSLYCAVIVKKVDAKTLGKVGLNELLRTIEE</sequence>
<accession>Q65TC6</accession>
<evidence type="ECO:0000255" key="1">
    <source>
        <dbReference type="HAMAP-Rule" id="MF_00811"/>
    </source>
</evidence>
<proteinExistence type="inferred from homology"/>
<comment type="catalytic activity">
    <reaction evidence="1">
        <text>(S)-2,3,4,5-tetrahydrodipicolinate + succinyl-CoA + H2O = (S)-2-succinylamino-6-oxoheptanedioate + CoA</text>
        <dbReference type="Rhea" id="RHEA:17325"/>
        <dbReference type="ChEBI" id="CHEBI:15377"/>
        <dbReference type="ChEBI" id="CHEBI:15685"/>
        <dbReference type="ChEBI" id="CHEBI:16845"/>
        <dbReference type="ChEBI" id="CHEBI:57287"/>
        <dbReference type="ChEBI" id="CHEBI:57292"/>
        <dbReference type="EC" id="2.3.1.117"/>
    </reaction>
</comment>
<comment type="pathway">
    <text evidence="1">Amino-acid biosynthesis; L-lysine biosynthesis via DAP pathway; LL-2,6-diaminopimelate from (S)-tetrahydrodipicolinate (succinylase route): step 1/3.</text>
</comment>
<comment type="subunit">
    <text evidence="1">Homotrimer.</text>
</comment>
<comment type="subcellular location">
    <subcellularLocation>
        <location evidence="1">Cytoplasm</location>
    </subcellularLocation>
</comment>
<comment type="similarity">
    <text evidence="1">Belongs to the transferase hexapeptide repeat family.</text>
</comment>
<protein>
    <recommendedName>
        <fullName evidence="1">2,3,4,5-tetrahydropyridine-2,6-dicarboxylate N-succinyltransferase</fullName>
        <ecNumber evidence="1">2.3.1.117</ecNumber>
    </recommendedName>
    <alternativeName>
        <fullName evidence="1">Tetrahydrodipicolinate N-succinyltransferase</fullName>
        <shortName evidence="1">THDP succinyltransferase</shortName>
        <shortName evidence="1">THP succinyltransferase</shortName>
        <shortName evidence="1">Tetrahydropicolinate succinylase</shortName>
    </alternativeName>
</protein>
<gene>
    <name evidence="1" type="primary">dapD</name>
    <name type="ordered locus">MS1177</name>
</gene>
<name>DAPD_MANSM</name>
<reference key="1">
    <citation type="journal article" date="2004" name="Nat. Biotechnol.">
        <title>The genome sequence of the capnophilic rumen bacterium Mannheimia succiniciproducens.</title>
        <authorList>
            <person name="Hong S.H."/>
            <person name="Kim J.S."/>
            <person name="Lee S.Y."/>
            <person name="In Y.H."/>
            <person name="Choi S.S."/>
            <person name="Rih J.-K."/>
            <person name="Kim C.H."/>
            <person name="Jeong H."/>
            <person name="Hur C.G."/>
            <person name="Kim J.J."/>
        </authorList>
    </citation>
    <scope>NUCLEOTIDE SEQUENCE [LARGE SCALE GENOMIC DNA]</scope>
    <source>
        <strain>KCTC 0769BP / MBEL55E</strain>
    </source>
</reference>